<protein>
    <recommendedName>
        <fullName>Transcription initiation factor IIB</fullName>
    </recommendedName>
    <alternativeName>
        <fullName>General transcription factor TFIIB</fullName>
    </alternativeName>
</protein>
<proteinExistence type="inferred from homology"/>
<feature type="chain" id="PRO_0000119307" description="Transcription initiation factor IIB">
    <location>
        <begin position="1"/>
        <end position="340"/>
    </location>
</feature>
<feature type="repeat" description="1">
    <location>
        <begin position="128"/>
        <end position="204"/>
    </location>
</feature>
<feature type="repeat" description="2">
    <location>
        <begin position="239"/>
        <end position="315"/>
    </location>
</feature>
<feature type="zinc finger region" description="TFIIB-type" evidence="2">
    <location>
        <begin position="16"/>
        <end position="49"/>
    </location>
</feature>
<feature type="binding site" evidence="2">
    <location>
        <position position="20"/>
    </location>
    <ligand>
        <name>Zn(2+)</name>
        <dbReference type="ChEBI" id="CHEBI:29105"/>
    </ligand>
</feature>
<feature type="binding site" evidence="2">
    <location>
        <position position="23"/>
    </location>
    <ligand>
        <name>Zn(2+)</name>
        <dbReference type="ChEBI" id="CHEBI:29105"/>
    </ligand>
</feature>
<feature type="binding site" evidence="2">
    <location>
        <position position="41"/>
    </location>
    <ligand>
        <name>Zn(2+)</name>
        <dbReference type="ChEBI" id="CHEBI:29105"/>
    </ligand>
</feature>
<feature type="binding site" evidence="2">
    <location>
        <position position="44"/>
    </location>
    <ligand>
        <name>Zn(2+)</name>
        <dbReference type="ChEBI" id="CHEBI:29105"/>
    </ligand>
</feature>
<dbReference type="EMBL" id="CU329670">
    <property type="protein sequence ID" value="CAB11044.1"/>
    <property type="molecule type" value="Genomic_DNA"/>
</dbReference>
<dbReference type="PIR" id="T37796">
    <property type="entry name" value="T37796"/>
</dbReference>
<dbReference type="RefSeq" id="NP_594229.1">
    <property type="nucleotide sequence ID" value="NM_001019652.2"/>
</dbReference>
<dbReference type="SMR" id="O13749"/>
<dbReference type="BioGRID" id="278805">
    <property type="interactions" value="3"/>
</dbReference>
<dbReference type="FunCoup" id="O13749">
    <property type="interactions" value="647"/>
</dbReference>
<dbReference type="STRING" id="284812.O13749"/>
<dbReference type="iPTMnet" id="O13749"/>
<dbReference type="PaxDb" id="4896-SPAC16E8.16.1"/>
<dbReference type="EnsemblFungi" id="SPAC16E8.16.1">
    <property type="protein sequence ID" value="SPAC16E8.16.1:pep"/>
    <property type="gene ID" value="SPAC16E8.16"/>
</dbReference>
<dbReference type="GeneID" id="2542339"/>
<dbReference type="KEGG" id="spo:2542339"/>
<dbReference type="PomBase" id="SPAC16E8.16">
    <property type="gene designation" value="sua7"/>
</dbReference>
<dbReference type="VEuPathDB" id="FungiDB:SPAC16E8.16"/>
<dbReference type="eggNOG" id="KOG1597">
    <property type="taxonomic scope" value="Eukaryota"/>
</dbReference>
<dbReference type="HOGENOM" id="CLU_043736_1_0_1"/>
<dbReference type="InParanoid" id="O13749"/>
<dbReference type="OMA" id="DHDQRMK"/>
<dbReference type="PhylomeDB" id="O13749"/>
<dbReference type="Reactome" id="R-SPO-674695">
    <property type="pathway name" value="RNA Polymerase II Pre-transcription Events"/>
</dbReference>
<dbReference type="Reactome" id="R-SPO-6807505">
    <property type="pathway name" value="RNA polymerase II transcribes snRNA genes"/>
</dbReference>
<dbReference type="Reactome" id="R-SPO-73776">
    <property type="pathway name" value="RNA Polymerase II Promoter Escape"/>
</dbReference>
<dbReference type="Reactome" id="R-SPO-73779">
    <property type="pathway name" value="RNA Polymerase II Transcription Pre-Initiation And Promoter Opening"/>
</dbReference>
<dbReference type="Reactome" id="R-SPO-75953">
    <property type="pathway name" value="RNA Polymerase II Transcription Initiation"/>
</dbReference>
<dbReference type="Reactome" id="R-SPO-76042">
    <property type="pathway name" value="RNA Polymerase II Transcription Initiation And Promoter Clearance"/>
</dbReference>
<dbReference type="PRO" id="PR:O13749"/>
<dbReference type="Proteomes" id="UP000002485">
    <property type="component" value="Chromosome I"/>
</dbReference>
<dbReference type="GO" id="GO:0005634">
    <property type="term" value="C:nucleus"/>
    <property type="evidence" value="ECO:0007005"/>
    <property type="project" value="PomBase"/>
</dbReference>
<dbReference type="GO" id="GO:0097550">
    <property type="term" value="C:transcription preinitiation complex"/>
    <property type="evidence" value="ECO:0000318"/>
    <property type="project" value="GO_Central"/>
</dbReference>
<dbReference type="GO" id="GO:0016251">
    <property type="term" value="F:RNA polymerase II general transcription initiation factor activity"/>
    <property type="evidence" value="ECO:0000314"/>
    <property type="project" value="PomBase"/>
</dbReference>
<dbReference type="GO" id="GO:0017025">
    <property type="term" value="F:TBP-class protein binding"/>
    <property type="evidence" value="ECO:0000318"/>
    <property type="project" value="GO_Central"/>
</dbReference>
<dbReference type="GO" id="GO:0008270">
    <property type="term" value="F:zinc ion binding"/>
    <property type="evidence" value="ECO:0007669"/>
    <property type="project" value="UniProtKB-KW"/>
</dbReference>
<dbReference type="GO" id="GO:0006352">
    <property type="term" value="P:DNA-templated transcription initiation"/>
    <property type="evidence" value="ECO:0000318"/>
    <property type="project" value="GO_Central"/>
</dbReference>
<dbReference type="GO" id="GO:0051123">
    <property type="term" value="P:RNA polymerase II preinitiation complex assembly"/>
    <property type="evidence" value="ECO:0000314"/>
    <property type="project" value="PomBase"/>
</dbReference>
<dbReference type="GO" id="GO:0006367">
    <property type="term" value="P:transcription initiation at RNA polymerase II promoter"/>
    <property type="evidence" value="ECO:0000314"/>
    <property type="project" value="PomBase"/>
</dbReference>
<dbReference type="GO" id="GO:0001174">
    <property type="term" value="P:transcriptional start site selection at RNA polymerase II promoter"/>
    <property type="evidence" value="ECO:0000318"/>
    <property type="project" value="GO_Central"/>
</dbReference>
<dbReference type="CDD" id="cd20551">
    <property type="entry name" value="CYCLIN_TFIIB_rpt1"/>
    <property type="match status" value="1"/>
</dbReference>
<dbReference type="CDD" id="cd20552">
    <property type="entry name" value="CYCLIN_TFIIB_rpt2"/>
    <property type="match status" value="1"/>
</dbReference>
<dbReference type="FunFam" id="1.10.472.10:FF:000008">
    <property type="entry name" value="Transcription initiation factor IIB"/>
    <property type="match status" value="1"/>
</dbReference>
<dbReference type="FunFam" id="1.10.472.170:FF:000001">
    <property type="entry name" value="Transcription initiation factor IIB"/>
    <property type="match status" value="1"/>
</dbReference>
<dbReference type="FunFam" id="2.20.25.10:FF:000036">
    <property type="entry name" value="Transcription initiation factor IIB"/>
    <property type="match status" value="1"/>
</dbReference>
<dbReference type="FunFam" id="1.10.472.10:FF:000019">
    <property type="entry name" value="transcription initiation factor IIB"/>
    <property type="match status" value="1"/>
</dbReference>
<dbReference type="Gene3D" id="1.10.472.170">
    <property type="match status" value="1"/>
</dbReference>
<dbReference type="Gene3D" id="1.10.472.10">
    <property type="entry name" value="Cyclin-like"/>
    <property type="match status" value="1"/>
</dbReference>
<dbReference type="InterPro" id="IPR013763">
    <property type="entry name" value="Cyclin-like_dom"/>
</dbReference>
<dbReference type="InterPro" id="IPR036915">
    <property type="entry name" value="Cyclin-like_sf"/>
</dbReference>
<dbReference type="InterPro" id="IPR000812">
    <property type="entry name" value="TFIIB"/>
</dbReference>
<dbReference type="InterPro" id="IPR023486">
    <property type="entry name" value="TFIIB_CS"/>
</dbReference>
<dbReference type="InterPro" id="IPR013150">
    <property type="entry name" value="TFIIB_cyclin"/>
</dbReference>
<dbReference type="InterPro" id="IPR013137">
    <property type="entry name" value="Znf_TFIIB"/>
</dbReference>
<dbReference type="PANTHER" id="PTHR11618:SF13">
    <property type="entry name" value="TRANSCRIPTION INITIATION FACTOR IIB"/>
    <property type="match status" value="1"/>
</dbReference>
<dbReference type="PANTHER" id="PTHR11618">
    <property type="entry name" value="TRANSCRIPTION INITIATION FACTOR IIB-RELATED"/>
    <property type="match status" value="1"/>
</dbReference>
<dbReference type="Pfam" id="PF00382">
    <property type="entry name" value="TFIIB"/>
    <property type="match status" value="2"/>
</dbReference>
<dbReference type="Pfam" id="PF08271">
    <property type="entry name" value="Zn_Ribbon_TF"/>
    <property type="match status" value="1"/>
</dbReference>
<dbReference type="PRINTS" id="PR00685">
    <property type="entry name" value="TIFACTORIIB"/>
</dbReference>
<dbReference type="SMART" id="SM00385">
    <property type="entry name" value="CYCLIN"/>
    <property type="match status" value="2"/>
</dbReference>
<dbReference type="SUPFAM" id="SSF47954">
    <property type="entry name" value="Cyclin-like"/>
    <property type="match status" value="2"/>
</dbReference>
<dbReference type="SUPFAM" id="SSF57783">
    <property type="entry name" value="Zinc beta-ribbon"/>
    <property type="match status" value="1"/>
</dbReference>
<dbReference type="PROSITE" id="PS00782">
    <property type="entry name" value="TFIIB"/>
    <property type="match status" value="1"/>
</dbReference>
<dbReference type="PROSITE" id="PS51134">
    <property type="entry name" value="ZF_TFIIB"/>
    <property type="match status" value="1"/>
</dbReference>
<keyword id="KW-0479">Metal-binding</keyword>
<keyword id="KW-0539">Nucleus</keyword>
<keyword id="KW-1185">Reference proteome</keyword>
<keyword id="KW-0677">Repeat</keyword>
<keyword id="KW-0804">Transcription</keyword>
<keyword id="KW-0805">Transcription regulation</keyword>
<keyword id="KW-0862">Zinc</keyword>
<keyword id="KW-0863">Zinc-finger</keyword>
<reference key="1">
    <citation type="journal article" date="2002" name="Nature">
        <title>The genome sequence of Schizosaccharomyces pombe.</title>
        <authorList>
            <person name="Wood V."/>
            <person name="Gwilliam R."/>
            <person name="Rajandream M.A."/>
            <person name="Lyne M.H."/>
            <person name="Lyne R."/>
            <person name="Stewart A."/>
            <person name="Sgouros J.G."/>
            <person name="Peat N."/>
            <person name="Hayles J."/>
            <person name="Baker S.G."/>
            <person name="Basham D."/>
            <person name="Bowman S."/>
            <person name="Brooks K."/>
            <person name="Brown D."/>
            <person name="Brown S."/>
            <person name="Chillingworth T."/>
            <person name="Churcher C.M."/>
            <person name="Collins M."/>
            <person name="Connor R."/>
            <person name="Cronin A."/>
            <person name="Davis P."/>
            <person name="Feltwell T."/>
            <person name="Fraser A."/>
            <person name="Gentles S."/>
            <person name="Goble A."/>
            <person name="Hamlin N."/>
            <person name="Harris D.E."/>
            <person name="Hidalgo J."/>
            <person name="Hodgson G."/>
            <person name="Holroyd S."/>
            <person name="Hornsby T."/>
            <person name="Howarth S."/>
            <person name="Huckle E.J."/>
            <person name="Hunt S."/>
            <person name="Jagels K."/>
            <person name="James K.D."/>
            <person name="Jones L."/>
            <person name="Jones M."/>
            <person name="Leather S."/>
            <person name="McDonald S."/>
            <person name="McLean J."/>
            <person name="Mooney P."/>
            <person name="Moule S."/>
            <person name="Mungall K.L."/>
            <person name="Murphy L.D."/>
            <person name="Niblett D."/>
            <person name="Odell C."/>
            <person name="Oliver K."/>
            <person name="O'Neil S."/>
            <person name="Pearson D."/>
            <person name="Quail M.A."/>
            <person name="Rabbinowitsch E."/>
            <person name="Rutherford K.M."/>
            <person name="Rutter S."/>
            <person name="Saunders D."/>
            <person name="Seeger K."/>
            <person name="Sharp S."/>
            <person name="Skelton J."/>
            <person name="Simmonds M.N."/>
            <person name="Squares R."/>
            <person name="Squares S."/>
            <person name="Stevens K."/>
            <person name="Taylor K."/>
            <person name="Taylor R.G."/>
            <person name="Tivey A."/>
            <person name="Walsh S.V."/>
            <person name="Warren T."/>
            <person name="Whitehead S."/>
            <person name="Woodward J.R."/>
            <person name="Volckaert G."/>
            <person name="Aert R."/>
            <person name="Robben J."/>
            <person name="Grymonprez B."/>
            <person name="Weltjens I."/>
            <person name="Vanstreels E."/>
            <person name="Rieger M."/>
            <person name="Schaefer M."/>
            <person name="Mueller-Auer S."/>
            <person name="Gabel C."/>
            <person name="Fuchs M."/>
            <person name="Duesterhoeft A."/>
            <person name="Fritzc C."/>
            <person name="Holzer E."/>
            <person name="Moestl D."/>
            <person name="Hilbert H."/>
            <person name="Borzym K."/>
            <person name="Langer I."/>
            <person name="Beck A."/>
            <person name="Lehrach H."/>
            <person name="Reinhardt R."/>
            <person name="Pohl T.M."/>
            <person name="Eger P."/>
            <person name="Zimmermann W."/>
            <person name="Wedler H."/>
            <person name="Wambutt R."/>
            <person name="Purnelle B."/>
            <person name="Goffeau A."/>
            <person name="Cadieu E."/>
            <person name="Dreano S."/>
            <person name="Gloux S."/>
            <person name="Lelaure V."/>
            <person name="Mottier S."/>
            <person name="Galibert F."/>
            <person name="Aves S.J."/>
            <person name="Xiang Z."/>
            <person name="Hunt C."/>
            <person name="Moore K."/>
            <person name="Hurst S.M."/>
            <person name="Lucas M."/>
            <person name="Rochet M."/>
            <person name="Gaillardin C."/>
            <person name="Tallada V.A."/>
            <person name="Garzon A."/>
            <person name="Thode G."/>
            <person name="Daga R.R."/>
            <person name="Cruzado L."/>
            <person name="Jimenez J."/>
            <person name="Sanchez M."/>
            <person name="del Rey F."/>
            <person name="Benito J."/>
            <person name="Dominguez A."/>
            <person name="Revuelta J.L."/>
            <person name="Moreno S."/>
            <person name="Armstrong J."/>
            <person name="Forsburg S.L."/>
            <person name="Cerutti L."/>
            <person name="Lowe T."/>
            <person name="McCombie W.R."/>
            <person name="Paulsen I."/>
            <person name="Potashkin J."/>
            <person name="Shpakovski G.V."/>
            <person name="Ussery D."/>
            <person name="Barrell B.G."/>
            <person name="Nurse P."/>
        </authorList>
    </citation>
    <scope>NUCLEOTIDE SEQUENCE [LARGE SCALE GENOMIC DNA]</scope>
    <source>
        <strain>972 / ATCC 24843</strain>
    </source>
</reference>
<sequence length="340" mass="36687">MNAPSFTGLPTSMLSVKMICSECREDPPNLVEEFSSGDTVCGSCGLVLGDRIIDTRSEWRTFSNSDEASGDPSRVGKVANPLLNGSQLDTTISSYDGAGAMLAKAQGRSVQVRGEKNLLTAYKEIGAMCDAISLPKVIADTAKQLYKRVDDHKALKGKSSQSIIAACIYIACRQGKVPRTFMEICTLTNVPKKEIGRVYKTLQRMLTEGGALHNSVDALKGHEYIQSSSTSAEDLMVRFCNRLMLPMSVQSAAAELARRAGLQGTLAGRSPISIAASGIYMISALMGYPKTPKEISEVTGVSDSTIRIAYKLLHAERKELIDPKWIANKAGNMDAMLPKP</sequence>
<comment type="function">
    <text evidence="1">General factor that plays a major role in the activation of eukaryotic genes transcribed by RNA polymerase II.</text>
</comment>
<comment type="subunit">
    <text evidence="1">Associates with TFIID-IIA (DA complex) to form TFIID-IIA-IIB (DAB-complex) which is then recognized by polymerase II.</text>
</comment>
<comment type="subcellular location">
    <subcellularLocation>
        <location evidence="1">Nucleus</location>
    </subcellularLocation>
</comment>
<comment type="similarity">
    <text evidence="3">Belongs to the TFIIB family.</text>
</comment>
<accession>O13749</accession>
<name>TF2B_SCHPO</name>
<gene>
    <name type="primary">sua7</name>
    <name type="ORF">SPAC16E8.16</name>
</gene>
<evidence type="ECO:0000250" key="1"/>
<evidence type="ECO:0000255" key="2">
    <source>
        <dbReference type="PROSITE-ProRule" id="PRU00469"/>
    </source>
</evidence>
<evidence type="ECO:0000305" key="3"/>
<organism>
    <name type="scientific">Schizosaccharomyces pombe (strain 972 / ATCC 24843)</name>
    <name type="common">Fission yeast</name>
    <dbReference type="NCBI Taxonomy" id="284812"/>
    <lineage>
        <taxon>Eukaryota</taxon>
        <taxon>Fungi</taxon>
        <taxon>Dikarya</taxon>
        <taxon>Ascomycota</taxon>
        <taxon>Taphrinomycotina</taxon>
        <taxon>Schizosaccharomycetes</taxon>
        <taxon>Schizosaccharomycetales</taxon>
        <taxon>Schizosaccharomycetaceae</taxon>
        <taxon>Schizosaccharomyces</taxon>
    </lineage>
</organism>